<protein>
    <recommendedName>
        <fullName evidence="1">Cell division protein ZapB</fullName>
    </recommendedName>
</protein>
<reference key="1">
    <citation type="submission" date="2008-02" db="EMBL/GenBank/DDBJ databases">
        <title>Complete sequence of Shewanella woodyi ATCC 51908.</title>
        <authorList>
            <consortium name="US DOE Joint Genome Institute"/>
            <person name="Copeland A."/>
            <person name="Lucas S."/>
            <person name="Lapidus A."/>
            <person name="Glavina del Rio T."/>
            <person name="Dalin E."/>
            <person name="Tice H."/>
            <person name="Bruce D."/>
            <person name="Goodwin L."/>
            <person name="Pitluck S."/>
            <person name="Sims D."/>
            <person name="Brettin T."/>
            <person name="Detter J.C."/>
            <person name="Han C."/>
            <person name="Kuske C.R."/>
            <person name="Schmutz J."/>
            <person name="Larimer F."/>
            <person name="Land M."/>
            <person name="Hauser L."/>
            <person name="Kyrpides N."/>
            <person name="Lykidis A."/>
            <person name="Zhao J.-S."/>
            <person name="Richardson P."/>
        </authorList>
    </citation>
    <scope>NUCLEOTIDE SEQUENCE [LARGE SCALE GENOMIC DNA]</scope>
    <source>
        <strain>ATCC 51908 / MS32</strain>
    </source>
</reference>
<sequence>MSLELLSKLETKIQTALETIELLKMELEEEKQKSIGLAEQNQQLSQDLNSWNEKVTGLVGLLNEEVN</sequence>
<name>ZAPB_SHEWM</name>
<organism>
    <name type="scientific">Shewanella woodyi (strain ATCC 51908 / MS32)</name>
    <dbReference type="NCBI Taxonomy" id="392500"/>
    <lineage>
        <taxon>Bacteria</taxon>
        <taxon>Pseudomonadati</taxon>
        <taxon>Pseudomonadota</taxon>
        <taxon>Gammaproteobacteria</taxon>
        <taxon>Alteromonadales</taxon>
        <taxon>Shewanellaceae</taxon>
        <taxon>Shewanella</taxon>
    </lineage>
</organism>
<gene>
    <name evidence="1" type="primary">zapB</name>
    <name type="ordered locus">Swoo_0402</name>
</gene>
<dbReference type="EMBL" id="CP000961">
    <property type="protein sequence ID" value="ACA84701.1"/>
    <property type="molecule type" value="Genomic_DNA"/>
</dbReference>
<dbReference type="RefSeq" id="WP_012323050.1">
    <property type="nucleotide sequence ID" value="NC_010506.1"/>
</dbReference>
<dbReference type="SMR" id="B1KPD1"/>
<dbReference type="STRING" id="392500.Swoo_0402"/>
<dbReference type="KEGG" id="swd:Swoo_0402"/>
<dbReference type="eggNOG" id="COG3074">
    <property type="taxonomic scope" value="Bacteria"/>
</dbReference>
<dbReference type="HOGENOM" id="CLU_171174_1_0_6"/>
<dbReference type="Proteomes" id="UP000002168">
    <property type="component" value="Chromosome"/>
</dbReference>
<dbReference type="GO" id="GO:0005737">
    <property type="term" value="C:cytoplasm"/>
    <property type="evidence" value="ECO:0007669"/>
    <property type="project" value="UniProtKB-SubCell"/>
</dbReference>
<dbReference type="GO" id="GO:0000917">
    <property type="term" value="P:division septum assembly"/>
    <property type="evidence" value="ECO:0007669"/>
    <property type="project" value="UniProtKB-KW"/>
</dbReference>
<dbReference type="GO" id="GO:0043093">
    <property type="term" value="P:FtsZ-dependent cytokinesis"/>
    <property type="evidence" value="ECO:0007669"/>
    <property type="project" value="UniProtKB-UniRule"/>
</dbReference>
<dbReference type="Gene3D" id="1.20.5.340">
    <property type="match status" value="1"/>
</dbReference>
<dbReference type="HAMAP" id="MF_01196">
    <property type="entry name" value="ZapB"/>
    <property type="match status" value="1"/>
</dbReference>
<dbReference type="InterPro" id="IPR009252">
    <property type="entry name" value="Cell_div_ZapB"/>
</dbReference>
<dbReference type="Pfam" id="PF06005">
    <property type="entry name" value="ZapB"/>
    <property type="match status" value="1"/>
</dbReference>
<feature type="chain" id="PRO_1000138452" description="Cell division protein ZapB">
    <location>
        <begin position="1"/>
        <end position="67"/>
    </location>
</feature>
<feature type="coiled-coil region" evidence="1">
    <location>
        <begin position="3"/>
        <end position="59"/>
    </location>
</feature>
<comment type="function">
    <text evidence="1">Non-essential, abundant cell division factor that is required for proper Z-ring formation. It is recruited early to the divisome by direct interaction with FtsZ, stimulating Z-ring assembly and thereby promoting cell division earlier in the cell cycle. Its recruitment to the Z-ring requires functional FtsA or ZipA.</text>
</comment>
<comment type="subunit">
    <text evidence="1">Homodimer. The ends of the coiled-coil dimer bind to each other, forming polymers. Interacts with FtsZ.</text>
</comment>
<comment type="subcellular location">
    <subcellularLocation>
        <location evidence="1">Cytoplasm</location>
    </subcellularLocation>
    <text evidence="1">Localizes to the septum at mid-cell, in a FtsZ-like pattern.</text>
</comment>
<comment type="similarity">
    <text evidence="1">Belongs to the ZapB family.</text>
</comment>
<accession>B1KPD1</accession>
<proteinExistence type="inferred from homology"/>
<evidence type="ECO:0000255" key="1">
    <source>
        <dbReference type="HAMAP-Rule" id="MF_01196"/>
    </source>
</evidence>
<keyword id="KW-0131">Cell cycle</keyword>
<keyword id="KW-0132">Cell division</keyword>
<keyword id="KW-0175">Coiled coil</keyword>
<keyword id="KW-0963">Cytoplasm</keyword>
<keyword id="KW-1185">Reference proteome</keyword>
<keyword id="KW-0717">Septation</keyword>